<proteinExistence type="evidence at protein level"/>
<protein>
    <recommendedName>
        <fullName evidence="4">CAPA-Periviscerokinin-2</fullName>
        <shortName evidence="4">CAPA-PVK-2</shortName>
    </recommendedName>
</protein>
<organism>
    <name type="scientific">Austrophasma gansbaaiense</name>
    <name type="common">Gladiator</name>
    <name type="synonym">Heel-walker</name>
    <dbReference type="NCBI Taxonomy" id="253136"/>
    <lineage>
        <taxon>Eukaryota</taxon>
        <taxon>Metazoa</taxon>
        <taxon>Ecdysozoa</taxon>
        <taxon>Arthropoda</taxon>
        <taxon>Hexapoda</taxon>
        <taxon>Insecta</taxon>
        <taxon>Pterygota</taxon>
        <taxon>Neoptera</taxon>
        <taxon>Polyneoptera</taxon>
        <taxon>Mantophasmatodea</taxon>
        <taxon>Austrophasmatidae</taxon>
        <taxon>Austrophasma</taxon>
    </lineage>
</organism>
<reference evidence="5" key="1">
    <citation type="journal article" date="2012" name="Syst. Biol.">
        <title>Peptidomics-based phylogeny and biogeography of Mantophasmatodea (Hexapoda).</title>
        <authorList>
            <person name="Predel R."/>
            <person name="Neupert S."/>
            <person name="Huetteroth W."/>
            <person name="Kahnt J."/>
            <person name="Waidelich D."/>
            <person name="Roth S."/>
        </authorList>
    </citation>
    <scope>PROTEIN SEQUENCE</scope>
    <scope>AMIDATION AT VAL-19</scope>
    <source>
        <tissue evidence="3">Abdominal perisympathetic organs</tissue>
    </source>
</reference>
<dbReference type="GO" id="GO:0005576">
    <property type="term" value="C:extracellular region"/>
    <property type="evidence" value="ECO:0007669"/>
    <property type="project" value="UniProtKB-SubCell"/>
</dbReference>
<dbReference type="GO" id="GO:0007218">
    <property type="term" value="P:neuropeptide signaling pathway"/>
    <property type="evidence" value="ECO:0007669"/>
    <property type="project" value="UniProtKB-KW"/>
</dbReference>
<feature type="peptide" id="PRO_0000421642" description="CAPA-Periviscerokinin-2" evidence="3">
    <location>
        <begin position="1"/>
        <end position="19"/>
    </location>
</feature>
<feature type="modified residue" description="Valine amide" evidence="3">
    <location>
        <position position="19"/>
    </location>
</feature>
<comment type="function">
    <text evidence="1">Mediates visceral muscle contractile activity (myotropic activity).</text>
</comment>
<comment type="subcellular location">
    <subcellularLocation>
        <location evidence="6">Secreted</location>
    </subcellularLocation>
</comment>
<comment type="similarity">
    <text evidence="2">Belongs to the periviscerokinin family.</text>
</comment>
<accession>B3A0D8</accession>
<name>PVK2_AUSGA</name>
<sequence>SGLQFAVLDGQGFLPFPRV</sequence>
<evidence type="ECO:0000250" key="1">
    <source>
        <dbReference type="UniProtKB" id="P83923"/>
    </source>
</evidence>
<evidence type="ECO:0000255" key="2"/>
<evidence type="ECO:0000269" key="3">
    <source>
    </source>
</evidence>
<evidence type="ECO:0000303" key="4">
    <source>
    </source>
</evidence>
<evidence type="ECO:0000305" key="5"/>
<evidence type="ECO:0000305" key="6">
    <source>
    </source>
</evidence>
<keyword id="KW-0027">Amidation</keyword>
<keyword id="KW-0903">Direct protein sequencing</keyword>
<keyword id="KW-0527">Neuropeptide</keyword>
<keyword id="KW-0964">Secreted</keyword>